<organism>
    <name type="scientific">Thermosipho africanus (strain TCF52B)</name>
    <dbReference type="NCBI Taxonomy" id="484019"/>
    <lineage>
        <taxon>Bacteria</taxon>
        <taxon>Thermotogati</taxon>
        <taxon>Thermotogota</taxon>
        <taxon>Thermotogae</taxon>
        <taxon>Thermotogales</taxon>
        <taxon>Fervidobacteriaceae</taxon>
        <taxon>Thermosipho</taxon>
    </lineage>
</organism>
<comment type="function">
    <text evidence="1">Major role in the synthesis of nucleoside triphosphates other than ATP. The ATP gamma phosphate is transferred to the NDP beta phosphate via a ping-pong mechanism, using a phosphorylated active-site intermediate.</text>
</comment>
<comment type="catalytic activity">
    <reaction evidence="1">
        <text>a 2'-deoxyribonucleoside 5'-diphosphate + ATP = a 2'-deoxyribonucleoside 5'-triphosphate + ADP</text>
        <dbReference type="Rhea" id="RHEA:44640"/>
        <dbReference type="ChEBI" id="CHEBI:30616"/>
        <dbReference type="ChEBI" id="CHEBI:61560"/>
        <dbReference type="ChEBI" id="CHEBI:73316"/>
        <dbReference type="ChEBI" id="CHEBI:456216"/>
        <dbReference type="EC" id="2.7.4.6"/>
    </reaction>
</comment>
<comment type="catalytic activity">
    <reaction evidence="1">
        <text>a ribonucleoside 5'-diphosphate + ATP = a ribonucleoside 5'-triphosphate + ADP</text>
        <dbReference type="Rhea" id="RHEA:18113"/>
        <dbReference type="ChEBI" id="CHEBI:30616"/>
        <dbReference type="ChEBI" id="CHEBI:57930"/>
        <dbReference type="ChEBI" id="CHEBI:61557"/>
        <dbReference type="ChEBI" id="CHEBI:456216"/>
        <dbReference type="EC" id="2.7.4.6"/>
    </reaction>
</comment>
<comment type="cofactor">
    <cofactor evidence="1">
        <name>Mg(2+)</name>
        <dbReference type="ChEBI" id="CHEBI:18420"/>
    </cofactor>
</comment>
<comment type="subunit">
    <text evidence="1">Homotetramer.</text>
</comment>
<comment type="subcellular location">
    <subcellularLocation>
        <location evidence="1">Cytoplasm</location>
    </subcellularLocation>
</comment>
<comment type="similarity">
    <text evidence="1">Belongs to the NDK family.</text>
</comment>
<sequence>MERTFVYLKPNAVRRGLVGEIIKRFEQRGIKIVALKLLWMSKQQAEKLYEMHKGKSFYNDLIDFVTGGPIVAMIVEAPRVIEMVRHIIGDTDPLKAGTGTIRGEFALTITKNLIHASDSKENFEREYKIFFSDDEIIDYYLDVQDDI</sequence>
<keyword id="KW-0067">ATP-binding</keyword>
<keyword id="KW-0963">Cytoplasm</keyword>
<keyword id="KW-0418">Kinase</keyword>
<keyword id="KW-0460">Magnesium</keyword>
<keyword id="KW-0479">Metal-binding</keyword>
<keyword id="KW-0546">Nucleotide metabolism</keyword>
<keyword id="KW-0547">Nucleotide-binding</keyword>
<keyword id="KW-0597">Phosphoprotein</keyword>
<keyword id="KW-1185">Reference proteome</keyword>
<keyword id="KW-0808">Transferase</keyword>
<evidence type="ECO:0000255" key="1">
    <source>
        <dbReference type="HAMAP-Rule" id="MF_00451"/>
    </source>
</evidence>
<protein>
    <recommendedName>
        <fullName evidence="1">Nucleoside diphosphate kinase</fullName>
        <shortName evidence="1">NDK</shortName>
        <shortName evidence="1">NDP kinase</shortName>
        <ecNumber evidence="1">2.7.4.6</ecNumber>
    </recommendedName>
    <alternativeName>
        <fullName evidence="1">Nucleoside-2-P kinase</fullName>
    </alternativeName>
</protein>
<name>NDK_THEAB</name>
<dbReference type="EC" id="2.7.4.6" evidence="1"/>
<dbReference type="EMBL" id="CP001185">
    <property type="protein sequence ID" value="ACJ75240.1"/>
    <property type="molecule type" value="Genomic_DNA"/>
</dbReference>
<dbReference type="RefSeq" id="WP_004100342.1">
    <property type="nucleotide sequence ID" value="NC_011653.1"/>
</dbReference>
<dbReference type="SMR" id="B7IGM6"/>
<dbReference type="STRING" id="484019.THA_778"/>
<dbReference type="KEGG" id="taf:THA_778"/>
<dbReference type="eggNOG" id="COG0105">
    <property type="taxonomic scope" value="Bacteria"/>
</dbReference>
<dbReference type="HOGENOM" id="CLU_060216_6_3_0"/>
<dbReference type="OrthoDB" id="9801161at2"/>
<dbReference type="Proteomes" id="UP000002453">
    <property type="component" value="Chromosome"/>
</dbReference>
<dbReference type="GO" id="GO:0005737">
    <property type="term" value="C:cytoplasm"/>
    <property type="evidence" value="ECO:0007669"/>
    <property type="project" value="UniProtKB-SubCell"/>
</dbReference>
<dbReference type="GO" id="GO:0005524">
    <property type="term" value="F:ATP binding"/>
    <property type="evidence" value="ECO:0007669"/>
    <property type="project" value="UniProtKB-UniRule"/>
</dbReference>
<dbReference type="GO" id="GO:0046872">
    <property type="term" value="F:metal ion binding"/>
    <property type="evidence" value="ECO:0007669"/>
    <property type="project" value="UniProtKB-KW"/>
</dbReference>
<dbReference type="GO" id="GO:0004550">
    <property type="term" value="F:nucleoside diphosphate kinase activity"/>
    <property type="evidence" value="ECO:0007669"/>
    <property type="project" value="UniProtKB-UniRule"/>
</dbReference>
<dbReference type="GO" id="GO:0006241">
    <property type="term" value="P:CTP biosynthetic process"/>
    <property type="evidence" value="ECO:0007669"/>
    <property type="project" value="UniProtKB-UniRule"/>
</dbReference>
<dbReference type="GO" id="GO:0006183">
    <property type="term" value="P:GTP biosynthetic process"/>
    <property type="evidence" value="ECO:0007669"/>
    <property type="project" value="UniProtKB-UniRule"/>
</dbReference>
<dbReference type="GO" id="GO:0006228">
    <property type="term" value="P:UTP biosynthetic process"/>
    <property type="evidence" value="ECO:0007669"/>
    <property type="project" value="UniProtKB-UniRule"/>
</dbReference>
<dbReference type="CDD" id="cd04413">
    <property type="entry name" value="NDPk_I"/>
    <property type="match status" value="1"/>
</dbReference>
<dbReference type="FunFam" id="3.30.70.141:FF:000003">
    <property type="entry name" value="Nucleoside diphosphate kinase"/>
    <property type="match status" value="1"/>
</dbReference>
<dbReference type="Gene3D" id="3.30.70.141">
    <property type="entry name" value="Nucleoside diphosphate kinase-like domain"/>
    <property type="match status" value="1"/>
</dbReference>
<dbReference type="HAMAP" id="MF_00451">
    <property type="entry name" value="NDP_kinase"/>
    <property type="match status" value="1"/>
</dbReference>
<dbReference type="InterPro" id="IPR034907">
    <property type="entry name" value="NDK-like_dom"/>
</dbReference>
<dbReference type="InterPro" id="IPR036850">
    <property type="entry name" value="NDK-like_dom_sf"/>
</dbReference>
<dbReference type="InterPro" id="IPR001564">
    <property type="entry name" value="Nucleoside_diP_kinase"/>
</dbReference>
<dbReference type="InterPro" id="IPR023005">
    <property type="entry name" value="Nucleoside_diP_kinase_AS"/>
</dbReference>
<dbReference type="NCBIfam" id="NF001908">
    <property type="entry name" value="PRK00668.1"/>
    <property type="match status" value="1"/>
</dbReference>
<dbReference type="PANTHER" id="PTHR11349">
    <property type="entry name" value="NUCLEOSIDE DIPHOSPHATE KINASE"/>
    <property type="match status" value="1"/>
</dbReference>
<dbReference type="Pfam" id="PF00334">
    <property type="entry name" value="NDK"/>
    <property type="match status" value="1"/>
</dbReference>
<dbReference type="PRINTS" id="PR01243">
    <property type="entry name" value="NUCDPKINASE"/>
</dbReference>
<dbReference type="SMART" id="SM00562">
    <property type="entry name" value="NDK"/>
    <property type="match status" value="1"/>
</dbReference>
<dbReference type="SUPFAM" id="SSF54919">
    <property type="entry name" value="Nucleoside diphosphate kinase, NDK"/>
    <property type="match status" value="1"/>
</dbReference>
<dbReference type="PROSITE" id="PS00469">
    <property type="entry name" value="NDPK"/>
    <property type="match status" value="1"/>
</dbReference>
<dbReference type="PROSITE" id="PS51374">
    <property type="entry name" value="NDPK_LIKE"/>
    <property type="match status" value="1"/>
</dbReference>
<feature type="chain" id="PRO_1000125026" description="Nucleoside diphosphate kinase">
    <location>
        <begin position="1"/>
        <end position="147"/>
    </location>
</feature>
<feature type="active site" description="Pros-phosphohistidine intermediate" evidence="1">
    <location>
        <position position="115"/>
    </location>
</feature>
<feature type="binding site" evidence="1">
    <location>
        <position position="9"/>
    </location>
    <ligand>
        <name>ATP</name>
        <dbReference type="ChEBI" id="CHEBI:30616"/>
    </ligand>
</feature>
<feature type="binding site" evidence="1">
    <location>
        <position position="57"/>
    </location>
    <ligand>
        <name>ATP</name>
        <dbReference type="ChEBI" id="CHEBI:30616"/>
    </ligand>
</feature>
<feature type="binding site" evidence="1">
    <location>
        <position position="85"/>
    </location>
    <ligand>
        <name>ATP</name>
        <dbReference type="ChEBI" id="CHEBI:30616"/>
    </ligand>
</feature>
<feature type="binding site" evidence="1">
    <location>
        <position position="91"/>
    </location>
    <ligand>
        <name>ATP</name>
        <dbReference type="ChEBI" id="CHEBI:30616"/>
    </ligand>
</feature>
<feature type="binding site" evidence="1">
    <location>
        <position position="102"/>
    </location>
    <ligand>
        <name>ATP</name>
        <dbReference type="ChEBI" id="CHEBI:30616"/>
    </ligand>
</feature>
<feature type="binding site" evidence="1">
    <location>
        <position position="112"/>
    </location>
    <ligand>
        <name>ATP</name>
        <dbReference type="ChEBI" id="CHEBI:30616"/>
    </ligand>
</feature>
<accession>B7IGM6</accession>
<reference key="1">
    <citation type="journal article" date="2009" name="J. Bacteriol.">
        <title>The genome of Thermosipho africanus TCF52B: lateral genetic connections to the Firmicutes and Archaea.</title>
        <authorList>
            <person name="Nesboe C.L."/>
            <person name="Bapteste E."/>
            <person name="Curtis B."/>
            <person name="Dahle H."/>
            <person name="Lopez P."/>
            <person name="Macleod D."/>
            <person name="Dlutek M."/>
            <person name="Bowman S."/>
            <person name="Zhaxybayeva O."/>
            <person name="Birkeland N.-K."/>
            <person name="Doolittle W.F."/>
        </authorList>
    </citation>
    <scope>NUCLEOTIDE SEQUENCE [LARGE SCALE GENOMIC DNA]</scope>
    <source>
        <strain>TCF52B</strain>
    </source>
</reference>
<gene>
    <name evidence="1" type="primary">ndk</name>
    <name type="ordered locus">THA_778</name>
</gene>
<proteinExistence type="inferred from homology"/>